<feature type="chain" id="PRO_1000136166" description="D-cysteine desulfhydrase">
    <location>
        <begin position="1"/>
        <end position="328"/>
    </location>
</feature>
<feature type="modified residue" description="N6-(pyridoxal phosphate)lysine" evidence="1">
    <location>
        <position position="51"/>
    </location>
</feature>
<accession>B5FRX8</accession>
<name>DCYD_SALDC</name>
<dbReference type="EC" id="4.4.1.15" evidence="1"/>
<dbReference type="EMBL" id="CP001144">
    <property type="protein sequence ID" value="ACH76130.1"/>
    <property type="molecule type" value="Genomic_DNA"/>
</dbReference>
<dbReference type="RefSeq" id="WP_001128188.1">
    <property type="nucleotide sequence ID" value="NC_011205.1"/>
</dbReference>
<dbReference type="SMR" id="B5FRX8"/>
<dbReference type="KEGG" id="sed:SeD_A1290"/>
<dbReference type="HOGENOM" id="CLU_048897_1_0_6"/>
<dbReference type="Proteomes" id="UP000008322">
    <property type="component" value="Chromosome"/>
</dbReference>
<dbReference type="GO" id="GO:0019148">
    <property type="term" value="F:D-cysteine desulfhydrase activity"/>
    <property type="evidence" value="ECO:0007669"/>
    <property type="project" value="UniProtKB-UniRule"/>
</dbReference>
<dbReference type="GO" id="GO:0046416">
    <property type="term" value="P:D-amino acid metabolic process"/>
    <property type="evidence" value="ECO:0007669"/>
    <property type="project" value="UniProtKB-UniRule"/>
</dbReference>
<dbReference type="CDD" id="cd06449">
    <property type="entry name" value="ACCD"/>
    <property type="match status" value="1"/>
</dbReference>
<dbReference type="FunFam" id="3.40.50.1100:FF:000019">
    <property type="entry name" value="D-cysteine desulfhydrase"/>
    <property type="match status" value="1"/>
</dbReference>
<dbReference type="Gene3D" id="3.40.50.1100">
    <property type="match status" value="2"/>
</dbReference>
<dbReference type="HAMAP" id="MF_01045">
    <property type="entry name" value="D_Cys_desulfhydr"/>
    <property type="match status" value="1"/>
</dbReference>
<dbReference type="InterPro" id="IPR027278">
    <property type="entry name" value="ACCD_DCysDesulf"/>
</dbReference>
<dbReference type="InterPro" id="IPR005966">
    <property type="entry name" value="D-Cys_desShydrase"/>
</dbReference>
<dbReference type="InterPro" id="IPR023702">
    <property type="entry name" value="D_Cys_desulphydr_bac"/>
</dbReference>
<dbReference type="InterPro" id="IPR001926">
    <property type="entry name" value="TrpB-like_PALP"/>
</dbReference>
<dbReference type="InterPro" id="IPR036052">
    <property type="entry name" value="TrpB-like_PALP_sf"/>
</dbReference>
<dbReference type="NCBIfam" id="TIGR01275">
    <property type="entry name" value="ACC_deam_rel"/>
    <property type="match status" value="1"/>
</dbReference>
<dbReference type="NCBIfam" id="NF003029">
    <property type="entry name" value="PRK03910.1-1"/>
    <property type="match status" value="1"/>
</dbReference>
<dbReference type="NCBIfam" id="NF003030">
    <property type="entry name" value="PRK03910.1-3"/>
    <property type="match status" value="1"/>
</dbReference>
<dbReference type="NCBIfam" id="NF003032">
    <property type="entry name" value="PRK03910.1-5"/>
    <property type="match status" value="1"/>
</dbReference>
<dbReference type="PANTHER" id="PTHR43780">
    <property type="entry name" value="1-AMINOCYCLOPROPANE-1-CARBOXYLATE DEAMINASE-RELATED"/>
    <property type="match status" value="1"/>
</dbReference>
<dbReference type="PANTHER" id="PTHR43780:SF2">
    <property type="entry name" value="1-AMINOCYCLOPROPANE-1-CARBOXYLATE DEAMINASE-RELATED"/>
    <property type="match status" value="1"/>
</dbReference>
<dbReference type="Pfam" id="PF00291">
    <property type="entry name" value="PALP"/>
    <property type="match status" value="1"/>
</dbReference>
<dbReference type="PIRSF" id="PIRSF006278">
    <property type="entry name" value="ACCD_DCysDesulf"/>
    <property type="match status" value="1"/>
</dbReference>
<dbReference type="SUPFAM" id="SSF53686">
    <property type="entry name" value="Tryptophan synthase beta subunit-like PLP-dependent enzymes"/>
    <property type="match status" value="1"/>
</dbReference>
<keyword id="KW-0456">Lyase</keyword>
<keyword id="KW-0663">Pyridoxal phosphate</keyword>
<proteinExistence type="inferred from homology"/>
<evidence type="ECO:0000255" key="1">
    <source>
        <dbReference type="HAMAP-Rule" id="MF_01045"/>
    </source>
</evidence>
<organism>
    <name type="scientific">Salmonella dublin (strain CT_02021853)</name>
    <dbReference type="NCBI Taxonomy" id="439851"/>
    <lineage>
        <taxon>Bacteria</taxon>
        <taxon>Pseudomonadati</taxon>
        <taxon>Pseudomonadota</taxon>
        <taxon>Gammaproteobacteria</taxon>
        <taxon>Enterobacterales</taxon>
        <taxon>Enterobacteriaceae</taxon>
        <taxon>Salmonella</taxon>
    </lineage>
</organism>
<sequence>MPLHHLTRFPRLELIGAPTPLEYLPRLSDYLGREIYIKRDDVTPIAMGGNKLRKLEFLVADALREGADTLITAGAIQSNHVRQTAAVAAKLGLHCVALLENPIGTTAENYLTNGNRLLLDLFNTQIEMCDALTDPDAQLQTLATRIEAQGFRPYVIPVGGSSALGAMGYVESALEIAQQCEEVVGLSSVVVASGSAGTHAGLAVGLEHLMPDVELIGVTVSRSVAEQKPKVIALQQAIAGQLALTATADIHLWDDYFAPGYGVPNDAGMEAVKLLASLEGVLLDPVYTGKAMAGLIDGISQKRFNDDGPILFIHTGGAPALFAYHPHV</sequence>
<comment type="function">
    <text evidence="1">Catalyzes the alpha,beta-elimination reaction of D-cysteine and of several D-cysteine derivatives. It could be a defense mechanism against D-cysteine.</text>
</comment>
<comment type="catalytic activity">
    <reaction evidence="1">
        <text>D-cysteine + H2O = hydrogen sulfide + pyruvate + NH4(+) + H(+)</text>
        <dbReference type="Rhea" id="RHEA:11268"/>
        <dbReference type="ChEBI" id="CHEBI:15361"/>
        <dbReference type="ChEBI" id="CHEBI:15377"/>
        <dbReference type="ChEBI" id="CHEBI:15378"/>
        <dbReference type="ChEBI" id="CHEBI:28938"/>
        <dbReference type="ChEBI" id="CHEBI:29919"/>
        <dbReference type="ChEBI" id="CHEBI:35236"/>
        <dbReference type="EC" id="4.4.1.15"/>
    </reaction>
</comment>
<comment type="cofactor">
    <cofactor evidence="1">
        <name>pyridoxal 5'-phosphate</name>
        <dbReference type="ChEBI" id="CHEBI:597326"/>
    </cofactor>
</comment>
<comment type="subunit">
    <text evidence="1">Homodimer.</text>
</comment>
<comment type="similarity">
    <text evidence="1">Belongs to the ACC deaminase/D-cysteine desulfhydrase family.</text>
</comment>
<reference key="1">
    <citation type="journal article" date="2011" name="J. Bacteriol.">
        <title>Comparative genomics of 28 Salmonella enterica isolates: evidence for CRISPR-mediated adaptive sublineage evolution.</title>
        <authorList>
            <person name="Fricke W.F."/>
            <person name="Mammel M.K."/>
            <person name="McDermott P.F."/>
            <person name="Tartera C."/>
            <person name="White D.G."/>
            <person name="Leclerc J.E."/>
            <person name="Ravel J."/>
            <person name="Cebula T.A."/>
        </authorList>
    </citation>
    <scope>NUCLEOTIDE SEQUENCE [LARGE SCALE GENOMIC DNA]</scope>
    <source>
        <strain>CT_02021853</strain>
    </source>
</reference>
<protein>
    <recommendedName>
        <fullName evidence="1">D-cysteine desulfhydrase</fullName>
        <ecNumber evidence="1">4.4.1.15</ecNumber>
    </recommendedName>
</protein>
<gene>
    <name evidence="1" type="primary">dcyD</name>
    <name type="ordered locus">SeD_A1290</name>
</gene>